<gene>
    <name evidence="1" type="primary">thiG</name>
    <name type="ordered locus">AFE_0643</name>
</gene>
<reference key="1">
    <citation type="journal article" date="2008" name="BMC Genomics">
        <title>Acidithiobacillus ferrooxidans metabolism: from genome sequence to industrial applications.</title>
        <authorList>
            <person name="Valdes J."/>
            <person name="Pedroso I."/>
            <person name="Quatrini R."/>
            <person name="Dodson R.J."/>
            <person name="Tettelin H."/>
            <person name="Blake R. II"/>
            <person name="Eisen J.A."/>
            <person name="Holmes D.S."/>
        </authorList>
    </citation>
    <scope>NUCLEOTIDE SEQUENCE [LARGE SCALE GENOMIC DNA]</scope>
    <source>
        <strain>ATCC 23270 / DSM 14882 / CIP 104768 / NCIMB 8455</strain>
    </source>
</reference>
<dbReference type="EC" id="2.8.1.10" evidence="1"/>
<dbReference type="EMBL" id="CP001219">
    <property type="protein sequence ID" value="ACK79244.1"/>
    <property type="molecule type" value="Genomic_DNA"/>
</dbReference>
<dbReference type="RefSeq" id="WP_012536257.1">
    <property type="nucleotide sequence ID" value="NC_011761.1"/>
</dbReference>
<dbReference type="SMR" id="B7J5U0"/>
<dbReference type="STRING" id="243159.AFE_0643"/>
<dbReference type="PaxDb" id="243159-AFE_0643"/>
<dbReference type="GeneID" id="65279994"/>
<dbReference type="KEGG" id="afr:AFE_0643"/>
<dbReference type="eggNOG" id="COG2022">
    <property type="taxonomic scope" value="Bacteria"/>
</dbReference>
<dbReference type="HOGENOM" id="CLU_062233_1_0_6"/>
<dbReference type="UniPathway" id="UPA00060"/>
<dbReference type="Proteomes" id="UP000001362">
    <property type="component" value="Chromosome"/>
</dbReference>
<dbReference type="GO" id="GO:0005737">
    <property type="term" value="C:cytoplasm"/>
    <property type="evidence" value="ECO:0007669"/>
    <property type="project" value="UniProtKB-SubCell"/>
</dbReference>
<dbReference type="GO" id="GO:1990107">
    <property type="term" value="F:thiazole synthase activity"/>
    <property type="evidence" value="ECO:0007669"/>
    <property type="project" value="UniProtKB-EC"/>
</dbReference>
<dbReference type="GO" id="GO:0009229">
    <property type="term" value="P:thiamine diphosphate biosynthetic process"/>
    <property type="evidence" value="ECO:0007669"/>
    <property type="project" value="UniProtKB-UniRule"/>
</dbReference>
<dbReference type="CDD" id="cd04728">
    <property type="entry name" value="ThiG"/>
    <property type="match status" value="1"/>
</dbReference>
<dbReference type="Gene3D" id="3.20.20.70">
    <property type="entry name" value="Aldolase class I"/>
    <property type="match status" value="1"/>
</dbReference>
<dbReference type="HAMAP" id="MF_00443">
    <property type="entry name" value="ThiG"/>
    <property type="match status" value="1"/>
</dbReference>
<dbReference type="InterPro" id="IPR013785">
    <property type="entry name" value="Aldolase_TIM"/>
</dbReference>
<dbReference type="InterPro" id="IPR033983">
    <property type="entry name" value="Thiazole_synthase_ThiG"/>
</dbReference>
<dbReference type="InterPro" id="IPR008867">
    <property type="entry name" value="ThiG"/>
</dbReference>
<dbReference type="PANTHER" id="PTHR34266">
    <property type="entry name" value="THIAZOLE SYNTHASE"/>
    <property type="match status" value="1"/>
</dbReference>
<dbReference type="PANTHER" id="PTHR34266:SF2">
    <property type="entry name" value="THIAZOLE SYNTHASE"/>
    <property type="match status" value="1"/>
</dbReference>
<dbReference type="Pfam" id="PF05690">
    <property type="entry name" value="ThiG"/>
    <property type="match status" value="1"/>
</dbReference>
<dbReference type="SUPFAM" id="SSF110399">
    <property type="entry name" value="ThiG-like"/>
    <property type="match status" value="1"/>
</dbReference>
<protein>
    <recommendedName>
        <fullName evidence="1">Thiazole synthase</fullName>
        <ecNumber evidence="1">2.8.1.10</ecNumber>
    </recommendedName>
</protein>
<organism>
    <name type="scientific">Acidithiobacillus ferrooxidans (strain ATCC 23270 / DSM 14882 / CIP 104768 / NCIMB 8455)</name>
    <name type="common">Ferrobacillus ferrooxidans (strain ATCC 23270)</name>
    <dbReference type="NCBI Taxonomy" id="243159"/>
    <lineage>
        <taxon>Bacteria</taxon>
        <taxon>Pseudomonadati</taxon>
        <taxon>Pseudomonadota</taxon>
        <taxon>Acidithiobacillia</taxon>
        <taxon>Acidithiobacillales</taxon>
        <taxon>Acidithiobacillaceae</taxon>
        <taxon>Acidithiobacillus</taxon>
    </lineage>
</organism>
<evidence type="ECO:0000255" key="1">
    <source>
        <dbReference type="HAMAP-Rule" id="MF_00443"/>
    </source>
</evidence>
<comment type="function">
    <text evidence="1">Catalyzes the rearrangement of 1-deoxy-D-xylulose 5-phosphate (DXP) to produce the thiazole phosphate moiety of thiamine. Sulfur is provided by the thiocarboxylate moiety of the carrier protein ThiS. In vitro, sulfur can be provided by H(2)S.</text>
</comment>
<comment type="catalytic activity">
    <reaction evidence="1">
        <text>[ThiS sulfur-carrier protein]-C-terminal-Gly-aminoethanethioate + 2-iminoacetate + 1-deoxy-D-xylulose 5-phosphate = [ThiS sulfur-carrier protein]-C-terminal Gly-Gly + 2-[(2R,5Z)-2-carboxy-4-methylthiazol-5(2H)-ylidene]ethyl phosphate + 2 H2O + H(+)</text>
        <dbReference type="Rhea" id="RHEA:26297"/>
        <dbReference type="Rhea" id="RHEA-COMP:12909"/>
        <dbReference type="Rhea" id="RHEA-COMP:19908"/>
        <dbReference type="ChEBI" id="CHEBI:15377"/>
        <dbReference type="ChEBI" id="CHEBI:15378"/>
        <dbReference type="ChEBI" id="CHEBI:57792"/>
        <dbReference type="ChEBI" id="CHEBI:62899"/>
        <dbReference type="ChEBI" id="CHEBI:77846"/>
        <dbReference type="ChEBI" id="CHEBI:90778"/>
        <dbReference type="ChEBI" id="CHEBI:232372"/>
        <dbReference type="EC" id="2.8.1.10"/>
    </reaction>
</comment>
<comment type="pathway">
    <text evidence="1">Cofactor biosynthesis; thiamine diphosphate biosynthesis.</text>
</comment>
<comment type="subunit">
    <text evidence="1">Homotetramer. Forms heterodimers with either ThiH or ThiS.</text>
</comment>
<comment type="subcellular location">
    <subcellularLocation>
        <location evidence="1">Cytoplasm</location>
    </subcellularLocation>
</comment>
<comment type="similarity">
    <text evidence="1">Belongs to the ThiG family.</text>
</comment>
<sequence>MRKDPLVIAGREYQSRLLVGTGKYKDFAETRAAIDAAGAEIVTVALRRMNLGQSKDAPNLLEFLPADRFTILPNTAGCYTAEDAVRTCRLARELGDWKLVKLEVIGDPQTLYPDMRQTYDAAKTLIAEGFEVMVYSVDDPVACKTFAEMGCVAVMPLAAPIGSGLGIRNPYNLRIILEQATVPILVDAGVGTASDVAVALELGCDGVLLNTAIAAAKDPILMAEAMRQGVEAGRKAFLAGRMPRKLYASASSPVDGLFFE</sequence>
<name>THIG_ACIF2</name>
<feature type="chain" id="PRO_1000196830" description="Thiazole synthase">
    <location>
        <begin position="1"/>
        <end position="260"/>
    </location>
</feature>
<feature type="active site" description="Schiff-base intermediate with DXP" evidence="1">
    <location>
        <position position="101"/>
    </location>
</feature>
<feature type="binding site" evidence="1">
    <location>
        <position position="162"/>
    </location>
    <ligand>
        <name>1-deoxy-D-xylulose 5-phosphate</name>
        <dbReference type="ChEBI" id="CHEBI:57792"/>
    </ligand>
</feature>
<feature type="binding site" evidence="1">
    <location>
        <begin position="188"/>
        <end position="189"/>
    </location>
    <ligand>
        <name>1-deoxy-D-xylulose 5-phosphate</name>
        <dbReference type="ChEBI" id="CHEBI:57792"/>
    </ligand>
</feature>
<feature type="binding site" evidence="1">
    <location>
        <begin position="210"/>
        <end position="211"/>
    </location>
    <ligand>
        <name>1-deoxy-D-xylulose 5-phosphate</name>
        <dbReference type="ChEBI" id="CHEBI:57792"/>
    </ligand>
</feature>
<accession>B7J5U0</accession>
<keyword id="KW-0963">Cytoplasm</keyword>
<keyword id="KW-1185">Reference proteome</keyword>
<keyword id="KW-0704">Schiff base</keyword>
<keyword id="KW-0784">Thiamine biosynthesis</keyword>
<keyword id="KW-0808">Transferase</keyword>
<proteinExistence type="inferred from homology"/>